<reference key="1">
    <citation type="journal article" date="2013" name="Nature">
        <title>The zebrafish reference genome sequence and its relationship to the human genome.</title>
        <authorList>
            <person name="Howe K."/>
            <person name="Clark M.D."/>
            <person name="Torroja C.F."/>
            <person name="Torrance J."/>
            <person name="Berthelot C."/>
            <person name="Muffato M."/>
            <person name="Collins J.E."/>
            <person name="Humphray S."/>
            <person name="McLaren K."/>
            <person name="Matthews L."/>
            <person name="McLaren S."/>
            <person name="Sealy I."/>
            <person name="Caccamo M."/>
            <person name="Churcher C."/>
            <person name="Scott C."/>
            <person name="Barrett J.C."/>
            <person name="Koch R."/>
            <person name="Rauch G.J."/>
            <person name="White S."/>
            <person name="Chow W."/>
            <person name="Kilian B."/>
            <person name="Quintais L.T."/>
            <person name="Guerra-Assuncao J.A."/>
            <person name="Zhou Y."/>
            <person name="Gu Y."/>
            <person name="Yen J."/>
            <person name="Vogel J.H."/>
            <person name="Eyre T."/>
            <person name="Redmond S."/>
            <person name="Banerjee R."/>
            <person name="Chi J."/>
            <person name="Fu B."/>
            <person name="Langley E."/>
            <person name="Maguire S.F."/>
            <person name="Laird G.K."/>
            <person name="Lloyd D."/>
            <person name="Kenyon E."/>
            <person name="Donaldson S."/>
            <person name="Sehra H."/>
            <person name="Almeida-King J."/>
            <person name="Loveland J."/>
            <person name="Trevanion S."/>
            <person name="Jones M."/>
            <person name="Quail M."/>
            <person name="Willey D."/>
            <person name="Hunt A."/>
            <person name="Burton J."/>
            <person name="Sims S."/>
            <person name="McLay K."/>
            <person name="Plumb B."/>
            <person name="Davis J."/>
            <person name="Clee C."/>
            <person name="Oliver K."/>
            <person name="Clark R."/>
            <person name="Riddle C."/>
            <person name="Elliot D."/>
            <person name="Threadgold G."/>
            <person name="Harden G."/>
            <person name="Ware D."/>
            <person name="Begum S."/>
            <person name="Mortimore B."/>
            <person name="Kerry G."/>
            <person name="Heath P."/>
            <person name="Phillimore B."/>
            <person name="Tracey A."/>
            <person name="Corby N."/>
            <person name="Dunn M."/>
            <person name="Johnson C."/>
            <person name="Wood J."/>
            <person name="Clark S."/>
            <person name="Pelan S."/>
            <person name="Griffiths G."/>
            <person name="Smith M."/>
            <person name="Glithero R."/>
            <person name="Howden P."/>
            <person name="Barker N."/>
            <person name="Lloyd C."/>
            <person name="Stevens C."/>
            <person name="Harley J."/>
            <person name="Holt K."/>
            <person name="Panagiotidis G."/>
            <person name="Lovell J."/>
            <person name="Beasley H."/>
            <person name="Henderson C."/>
            <person name="Gordon D."/>
            <person name="Auger K."/>
            <person name="Wright D."/>
            <person name="Collins J."/>
            <person name="Raisen C."/>
            <person name="Dyer L."/>
            <person name="Leung K."/>
            <person name="Robertson L."/>
            <person name="Ambridge K."/>
            <person name="Leongamornlert D."/>
            <person name="McGuire S."/>
            <person name="Gilderthorp R."/>
            <person name="Griffiths C."/>
            <person name="Manthravadi D."/>
            <person name="Nichol S."/>
            <person name="Barker G."/>
            <person name="Whitehead S."/>
            <person name="Kay M."/>
            <person name="Brown J."/>
            <person name="Murnane C."/>
            <person name="Gray E."/>
            <person name="Humphries M."/>
            <person name="Sycamore N."/>
            <person name="Barker D."/>
            <person name="Saunders D."/>
            <person name="Wallis J."/>
            <person name="Babbage A."/>
            <person name="Hammond S."/>
            <person name="Mashreghi-Mohammadi M."/>
            <person name="Barr L."/>
            <person name="Martin S."/>
            <person name="Wray P."/>
            <person name="Ellington A."/>
            <person name="Matthews N."/>
            <person name="Ellwood M."/>
            <person name="Woodmansey R."/>
            <person name="Clark G."/>
            <person name="Cooper J."/>
            <person name="Tromans A."/>
            <person name="Grafham D."/>
            <person name="Skuce C."/>
            <person name="Pandian R."/>
            <person name="Andrews R."/>
            <person name="Harrison E."/>
            <person name="Kimberley A."/>
            <person name="Garnett J."/>
            <person name="Fosker N."/>
            <person name="Hall R."/>
            <person name="Garner P."/>
            <person name="Kelly D."/>
            <person name="Bird C."/>
            <person name="Palmer S."/>
            <person name="Gehring I."/>
            <person name="Berger A."/>
            <person name="Dooley C.M."/>
            <person name="Ersan-Urun Z."/>
            <person name="Eser C."/>
            <person name="Geiger H."/>
            <person name="Geisler M."/>
            <person name="Karotki L."/>
            <person name="Kirn A."/>
            <person name="Konantz J."/>
            <person name="Konantz M."/>
            <person name="Oberlander M."/>
            <person name="Rudolph-Geiger S."/>
            <person name="Teucke M."/>
            <person name="Lanz C."/>
            <person name="Raddatz G."/>
            <person name="Osoegawa K."/>
            <person name="Zhu B."/>
            <person name="Rapp A."/>
            <person name="Widaa S."/>
            <person name="Langford C."/>
            <person name="Yang F."/>
            <person name="Schuster S.C."/>
            <person name="Carter N.P."/>
            <person name="Harrow J."/>
            <person name="Ning Z."/>
            <person name="Herrero J."/>
            <person name="Searle S.M."/>
            <person name="Enright A."/>
            <person name="Geisler R."/>
            <person name="Plasterk R.H."/>
            <person name="Lee C."/>
            <person name="Westerfield M."/>
            <person name="de Jong P.J."/>
            <person name="Zon L.I."/>
            <person name="Postlethwait J.H."/>
            <person name="Nusslein-Volhard C."/>
            <person name="Hubbard T.J."/>
            <person name="Roest Crollius H."/>
            <person name="Rogers J."/>
            <person name="Stemple D.L."/>
        </authorList>
    </citation>
    <scope>NUCLEOTIDE SEQUENCE [LARGE SCALE GENOMIC DNA]</scope>
    <source>
        <strain>Tuebingen</strain>
    </source>
</reference>
<reference key="2">
    <citation type="submission" date="2003-04" db="EMBL/GenBank/DDBJ databases">
        <authorList>
            <consortium name="NIH - Zebrafish Gene Collection (ZGC) project"/>
        </authorList>
    </citation>
    <scope>NUCLEOTIDE SEQUENCE [LARGE SCALE MRNA]</scope>
</reference>
<organism>
    <name type="scientific">Danio rerio</name>
    <name type="common">Zebrafish</name>
    <name type="synonym">Brachydanio rerio</name>
    <dbReference type="NCBI Taxonomy" id="7955"/>
    <lineage>
        <taxon>Eukaryota</taxon>
        <taxon>Metazoa</taxon>
        <taxon>Chordata</taxon>
        <taxon>Craniata</taxon>
        <taxon>Vertebrata</taxon>
        <taxon>Euteleostomi</taxon>
        <taxon>Actinopterygii</taxon>
        <taxon>Neopterygii</taxon>
        <taxon>Teleostei</taxon>
        <taxon>Ostariophysi</taxon>
        <taxon>Cypriniformes</taxon>
        <taxon>Danionidae</taxon>
        <taxon>Danioninae</taxon>
        <taxon>Danio</taxon>
    </lineage>
</organism>
<feature type="chain" id="PRO_0000419980" description="26S proteasome non-ATPase regulatory subunit 11B">
    <location>
        <begin position="1"/>
        <end position="422"/>
    </location>
</feature>
<feature type="domain" description="PCI" evidence="2">
    <location>
        <begin position="228"/>
        <end position="392"/>
    </location>
</feature>
<feature type="sequence conflict" description="In Ref. 2; AAH63978/AAH51618." evidence="3" ref="2">
    <original>I</original>
    <variation>T</variation>
    <location>
        <position position="217"/>
    </location>
</feature>
<name>PS11B_DANRE</name>
<gene>
    <name type="primary">psmd11b</name>
</gene>
<evidence type="ECO:0000250" key="1"/>
<evidence type="ECO:0000255" key="2">
    <source>
        <dbReference type="PROSITE-ProRule" id="PRU01185"/>
    </source>
</evidence>
<evidence type="ECO:0000305" key="3"/>
<sequence>MAAAAVVEFQRAQSLISTDRNASIDIFHSIVRRDVQEDDEEAVRVKEQSILELGSLLAKTGQAAELGGLLKFVRPFLISISKAKAARLVRSLLDLFLDMEAATGQEVELCLECIEWAKAEKRTFLRQALEARLISLYFDTKRYQEALQLESQLLQELKKMDDKALLVEVQLLESKTYHALSNLPKARAALTSARTTANAIYCPPKLQAALDMQSGIIHAAEEKDWKTAYSYFFEAFEGYDSIDSPRAVTALKYMLLCKIMLSLPEEVQALISGKLGLRYAGRQTDALKCIAQASKNRSLADFEKALTEYTKELRDDPIINTHLAKLYDNLLEQNLIRVIEPFSRVQITHIAGLIKLSKNDVERKLSQMILDKKFHGILDQGEDVLIIFEEPPVDKTYEAALETIQNMSKVVDSLYNKAKKLT</sequence>
<proteinExistence type="evidence at transcript level"/>
<comment type="function">
    <text evidence="1">Component of the lid subcomplex of the 26S proteasome, a multiprotein complex involved in the ATP-dependent degradation of ubiquitinated proteins. In the complex, psmd11b is required for proteasome assembly (By similarity).</text>
</comment>
<comment type="subunit">
    <text evidence="1">Component of the lid subcomplex of the 19S proteasome regulatory particle complex (also named PA700 complex). The 26S proteasome consists of a 20S proteasome core and two 19S regulatory subunits (By similarity).</text>
</comment>
<comment type="subcellular location">
    <subcellularLocation>
        <location evidence="1">Nucleus</location>
    </subcellularLocation>
    <subcellularLocation>
        <location evidence="1">Cytoplasm</location>
        <location evidence="1">Cytosol</location>
    </subcellularLocation>
</comment>
<comment type="similarity">
    <text evidence="3">Belongs to the proteasome subunit S9 family.</text>
</comment>
<dbReference type="EMBL" id="CR391936">
    <property type="status" value="NOT_ANNOTATED_CDS"/>
    <property type="molecule type" value="Genomic_DNA"/>
</dbReference>
<dbReference type="EMBL" id="BC051618">
    <property type="protein sequence ID" value="AAH51618.1"/>
    <property type="molecule type" value="mRNA"/>
</dbReference>
<dbReference type="EMBL" id="BC063978">
    <property type="protein sequence ID" value="AAH63978.1"/>
    <property type="molecule type" value="mRNA"/>
</dbReference>
<dbReference type="RefSeq" id="NP_955886.1">
    <property type="nucleotide sequence ID" value="NM_199592.1"/>
</dbReference>
<dbReference type="SMR" id="F1QGH9"/>
<dbReference type="FunCoup" id="F1QGH9">
    <property type="interactions" value="2026"/>
</dbReference>
<dbReference type="STRING" id="7955.ENSDARP00000020942"/>
<dbReference type="PaxDb" id="7955-ENSDARP00000020942"/>
<dbReference type="Ensembl" id="ENSDART00000016283">
    <property type="protein sequence ID" value="ENSDARP00000020942"/>
    <property type="gene ID" value="ENSDARG00000005134"/>
</dbReference>
<dbReference type="Ensembl" id="ENSDART00000164156">
    <property type="protein sequence ID" value="ENSDARP00000133045"/>
    <property type="gene ID" value="ENSDARG00000005134"/>
</dbReference>
<dbReference type="GeneID" id="322265"/>
<dbReference type="KEGG" id="dre:322265"/>
<dbReference type="AGR" id="ZFIN:ZDB-GENE-030131-984"/>
<dbReference type="CTD" id="322265"/>
<dbReference type="ZFIN" id="ZDB-GENE-030131-984">
    <property type="gene designation" value="psmd11b"/>
</dbReference>
<dbReference type="eggNOG" id="KOG1463">
    <property type="taxonomic scope" value="Eukaryota"/>
</dbReference>
<dbReference type="InParanoid" id="F1QGH9"/>
<dbReference type="OMA" id="LECKLHF"/>
<dbReference type="OrthoDB" id="1418352at2759"/>
<dbReference type="PhylomeDB" id="F1QGH9"/>
<dbReference type="TreeFam" id="TF106230"/>
<dbReference type="Reactome" id="R-DRE-1169091">
    <property type="pathway name" value="Activation of NF-kappaB in B cells"/>
</dbReference>
<dbReference type="Reactome" id="R-DRE-1236978">
    <property type="pathway name" value="Cross-presentation of soluble exogenous antigens (endosomes)"/>
</dbReference>
<dbReference type="Reactome" id="R-DRE-187577">
    <property type="pathway name" value="SCF(Skp2)-mediated degradation of p27/p21"/>
</dbReference>
<dbReference type="Reactome" id="R-DRE-349425">
    <property type="pathway name" value="Autodegradation of the E3 ubiquitin ligase COP1"/>
</dbReference>
<dbReference type="Reactome" id="R-DRE-350562">
    <property type="pathway name" value="Regulation of ornithine decarboxylase (ODC)"/>
</dbReference>
<dbReference type="Reactome" id="R-DRE-382556">
    <property type="pathway name" value="ABC-family proteins mediated transport"/>
</dbReference>
<dbReference type="Reactome" id="R-DRE-450408">
    <property type="pathway name" value="AUF1 (hnRNP D0) binds and destabilizes mRNA"/>
</dbReference>
<dbReference type="Reactome" id="R-DRE-4608870">
    <property type="pathway name" value="Asymmetric localization of PCP proteins"/>
</dbReference>
<dbReference type="Reactome" id="R-DRE-4641257">
    <property type="pathway name" value="Degradation of AXIN"/>
</dbReference>
<dbReference type="Reactome" id="R-DRE-4641258">
    <property type="pathway name" value="Degradation of DVL"/>
</dbReference>
<dbReference type="Reactome" id="R-DRE-5358346">
    <property type="pathway name" value="Hedgehog ligand biogenesis"/>
</dbReference>
<dbReference type="Reactome" id="R-DRE-5610780">
    <property type="pathway name" value="Degradation of GLI1 by the proteasome"/>
</dbReference>
<dbReference type="Reactome" id="R-DRE-5610785">
    <property type="pathway name" value="GLI3 is processed to GLI3R by the proteasome"/>
</dbReference>
<dbReference type="Reactome" id="R-DRE-5632684">
    <property type="pathway name" value="Hedgehog 'on' state"/>
</dbReference>
<dbReference type="Reactome" id="R-DRE-5687128">
    <property type="pathway name" value="MAPK6/MAPK4 signaling"/>
</dbReference>
<dbReference type="Reactome" id="R-DRE-5689603">
    <property type="pathway name" value="UCH proteinases"/>
</dbReference>
<dbReference type="Reactome" id="R-DRE-5689880">
    <property type="pathway name" value="Ub-specific processing proteases"/>
</dbReference>
<dbReference type="Reactome" id="R-DRE-6798695">
    <property type="pathway name" value="Neutrophil degranulation"/>
</dbReference>
<dbReference type="Reactome" id="R-DRE-68867">
    <property type="pathway name" value="Assembly of the pre-replicative complex"/>
</dbReference>
<dbReference type="Reactome" id="R-DRE-69017">
    <property type="pathway name" value="CDK-mediated phosphorylation and removal of Cdc6"/>
</dbReference>
<dbReference type="Reactome" id="R-DRE-69481">
    <property type="pathway name" value="G2/M Checkpoints"/>
</dbReference>
<dbReference type="Reactome" id="R-DRE-75815">
    <property type="pathway name" value="Ubiquitin-dependent degradation of Cyclin D"/>
</dbReference>
<dbReference type="Reactome" id="R-DRE-8852276">
    <property type="pathway name" value="The role of GTSE1 in G2/M progression after G2 checkpoint"/>
</dbReference>
<dbReference type="Reactome" id="R-DRE-8854050">
    <property type="pathway name" value="FBXL7 down-regulates AURKA during mitotic entry and in early mitosis"/>
</dbReference>
<dbReference type="Reactome" id="R-DRE-8939236">
    <property type="pathway name" value="RUNX1 regulates transcription of genes involved in differentiation of HSCs"/>
</dbReference>
<dbReference type="Reactome" id="R-DRE-8939902">
    <property type="pathway name" value="Regulation of RUNX2 expression and activity"/>
</dbReference>
<dbReference type="Reactome" id="R-DRE-8941858">
    <property type="pathway name" value="Regulation of RUNX3 expression and activity"/>
</dbReference>
<dbReference type="Reactome" id="R-DRE-8948751">
    <property type="pathway name" value="Regulation of PTEN stability and activity"/>
</dbReference>
<dbReference type="Reactome" id="R-DRE-8951664">
    <property type="pathway name" value="Neddylation"/>
</dbReference>
<dbReference type="Reactome" id="R-DRE-9755511">
    <property type="pathway name" value="KEAP1-NFE2L2 pathway"/>
</dbReference>
<dbReference type="Reactome" id="R-DRE-9762114">
    <property type="pathway name" value="GSK3B and BTRC:CUL1-mediated-degradation of NFE2L2"/>
</dbReference>
<dbReference type="Reactome" id="R-DRE-983168">
    <property type="pathway name" value="Antigen processing: Ubiquitination &amp; Proteasome degradation"/>
</dbReference>
<dbReference type="Reactome" id="R-DRE-9907900">
    <property type="pathway name" value="Proteasome assembly"/>
</dbReference>
<dbReference type="PRO" id="PR:F1QGH9"/>
<dbReference type="Proteomes" id="UP000000437">
    <property type="component" value="Chromosome 12"/>
</dbReference>
<dbReference type="Bgee" id="ENSDARG00000005134">
    <property type="expression patterns" value="Expressed in muscle tissue and 26 other cell types or tissues"/>
</dbReference>
<dbReference type="ExpressionAtlas" id="F1QGH9">
    <property type="expression patterns" value="baseline and differential"/>
</dbReference>
<dbReference type="GO" id="GO:0005829">
    <property type="term" value="C:cytosol"/>
    <property type="evidence" value="ECO:0007669"/>
    <property type="project" value="UniProtKB-SubCell"/>
</dbReference>
<dbReference type="GO" id="GO:0005634">
    <property type="term" value="C:nucleus"/>
    <property type="evidence" value="ECO:0007669"/>
    <property type="project" value="UniProtKB-SubCell"/>
</dbReference>
<dbReference type="GO" id="GO:0022624">
    <property type="term" value="C:proteasome accessory complex"/>
    <property type="evidence" value="ECO:0000250"/>
    <property type="project" value="UniProtKB"/>
</dbReference>
<dbReference type="GO" id="GO:0008541">
    <property type="term" value="C:proteasome regulatory particle, lid subcomplex"/>
    <property type="evidence" value="ECO:0000318"/>
    <property type="project" value="GO_Central"/>
</dbReference>
<dbReference type="GO" id="GO:0005198">
    <property type="term" value="F:structural molecule activity"/>
    <property type="evidence" value="ECO:0000318"/>
    <property type="project" value="GO_Central"/>
</dbReference>
<dbReference type="GO" id="GO:0043248">
    <property type="term" value="P:proteasome assembly"/>
    <property type="evidence" value="ECO:0000250"/>
    <property type="project" value="UniProtKB"/>
</dbReference>
<dbReference type="GO" id="GO:0048863">
    <property type="term" value="P:stem cell differentiation"/>
    <property type="evidence" value="ECO:0000250"/>
    <property type="project" value="UniProtKB"/>
</dbReference>
<dbReference type="GO" id="GO:0006511">
    <property type="term" value="P:ubiquitin-dependent protein catabolic process"/>
    <property type="evidence" value="ECO:0000250"/>
    <property type="project" value="UniProtKB"/>
</dbReference>
<dbReference type="FunFam" id="1.25.40.570:FF:000003">
    <property type="entry name" value="26S proteasome non-ATPase regulatory subunit 11"/>
    <property type="match status" value="1"/>
</dbReference>
<dbReference type="Gene3D" id="1.25.40.570">
    <property type="match status" value="1"/>
</dbReference>
<dbReference type="InterPro" id="IPR050871">
    <property type="entry name" value="26S_Proteasome/COP9_Components"/>
</dbReference>
<dbReference type="InterPro" id="IPR000717">
    <property type="entry name" value="PCI_dom"/>
</dbReference>
<dbReference type="InterPro" id="IPR040780">
    <property type="entry name" value="Rpn6_C_helix"/>
</dbReference>
<dbReference type="InterPro" id="IPR040773">
    <property type="entry name" value="Rpn6_N"/>
</dbReference>
<dbReference type="InterPro" id="IPR011990">
    <property type="entry name" value="TPR-like_helical_dom_sf"/>
</dbReference>
<dbReference type="InterPro" id="IPR036390">
    <property type="entry name" value="WH_DNA-bd_sf"/>
</dbReference>
<dbReference type="PANTHER" id="PTHR10678">
    <property type="entry name" value="26S PROTEASOME NON-ATPASE REGULATORY SUBUNIT 11/COP9 SIGNALOSOME COMPLEX SUBUNIT 2"/>
    <property type="match status" value="1"/>
</dbReference>
<dbReference type="Pfam" id="PF01399">
    <property type="entry name" value="PCI"/>
    <property type="match status" value="1"/>
</dbReference>
<dbReference type="Pfam" id="PF18503">
    <property type="entry name" value="RPN6_C_helix"/>
    <property type="match status" value="1"/>
</dbReference>
<dbReference type="Pfam" id="PF18055">
    <property type="entry name" value="RPN6_N"/>
    <property type="match status" value="1"/>
</dbReference>
<dbReference type="SMART" id="SM00753">
    <property type="entry name" value="PAM"/>
    <property type="match status" value="1"/>
</dbReference>
<dbReference type="SMART" id="SM00088">
    <property type="entry name" value="PINT"/>
    <property type="match status" value="1"/>
</dbReference>
<dbReference type="SUPFAM" id="SSF48452">
    <property type="entry name" value="TPR-like"/>
    <property type="match status" value="1"/>
</dbReference>
<dbReference type="SUPFAM" id="SSF46785">
    <property type="entry name" value="Winged helix' DNA-binding domain"/>
    <property type="match status" value="1"/>
</dbReference>
<dbReference type="PROSITE" id="PS50250">
    <property type="entry name" value="PCI"/>
    <property type="match status" value="1"/>
</dbReference>
<accession>F1QGH9</accession>
<accession>Q7ZTZ8</accession>
<protein>
    <recommendedName>
        <fullName>26S proteasome non-ATPase regulatory subunit 11B</fullName>
    </recommendedName>
    <alternativeName>
        <fullName>26S proteasome regulatory subunit RPN6-B</fullName>
    </alternativeName>
</protein>
<keyword id="KW-0963">Cytoplasm</keyword>
<keyword id="KW-0539">Nucleus</keyword>
<keyword id="KW-0647">Proteasome</keyword>
<keyword id="KW-1185">Reference proteome</keyword>